<comment type="function">
    <text evidence="1">Peptidoglycan polymerase that catalyzes glycan chain elongation from lipid-linked precursors.</text>
</comment>
<comment type="catalytic activity">
    <reaction evidence="1">
        <text>[GlcNAc-(1-&gt;4)-Mur2Ac(oyl-L-Ala-gamma-D-Glu-L-Lys-D-Ala-D-Ala)](n)-di-trans,octa-cis-undecaprenyl diphosphate + beta-D-GlcNAc-(1-&gt;4)-Mur2Ac(oyl-L-Ala-gamma-D-Glu-L-Lys-D-Ala-D-Ala)-di-trans,octa-cis-undecaprenyl diphosphate = [GlcNAc-(1-&gt;4)-Mur2Ac(oyl-L-Ala-gamma-D-Glu-L-Lys-D-Ala-D-Ala)](n+1)-di-trans,octa-cis-undecaprenyl diphosphate + di-trans,octa-cis-undecaprenyl diphosphate + H(+)</text>
        <dbReference type="Rhea" id="RHEA:23708"/>
        <dbReference type="Rhea" id="RHEA-COMP:9602"/>
        <dbReference type="Rhea" id="RHEA-COMP:9603"/>
        <dbReference type="ChEBI" id="CHEBI:15378"/>
        <dbReference type="ChEBI" id="CHEBI:58405"/>
        <dbReference type="ChEBI" id="CHEBI:60033"/>
        <dbReference type="ChEBI" id="CHEBI:78435"/>
        <dbReference type="EC" id="2.4.99.28"/>
    </reaction>
</comment>
<comment type="pathway">
    <text evidence="1">Cell wall biogenesis; peptidoglycan biosynthesis.</text>
</comment>
<comment type="subcellular location">
    <subcellularLocation>
        <location evidence="1">Cell inner membrane</location>
        <topology evidence="1">Single-pass membrane protein</topology>
    </subcellularLocation>
</comment>
<comment type="similarity">
    <text evidence="1">Belongs to the glycosyltransferase 51 family.</text>
</comment>
<organism>
    <name type="scientific">Neisseria meningitidis serogroup A / serotype 4A (strain DSM 15465 / Z2491)</name>
    <dbReference type="NCBI Taxonomy" id="122587"/>
    <lineage>
        <taxon>Bacteria</taxon>
        <taxon>Pseudomonadati</taxon>
        <taxon>Pseudomonadota</taxon>
        <taxon>Betaproteobacteria</taxon>
        <taxon>Neisseriales</taxon>
        <taxon>Neisseriaceae</taxon>
        <taxon>Neisseria</taxon>
    </lineage>
</organism>
<accession>P0A0Z3</accession>
<accession>A1ITV8</accession>
<accession>O52423</accession>
<accession>O52424</accession>
<accession>O52425</accession>
<accession>O52426</accession>
<accession>O52427</accession>
<accession>O52428</accession>
<accession>O52429</accession>
<accession>O52430</accession>
<accession>O52431</accession>
<accession>O52432</accession>
<accession>O54548</accession>
<accession>O54634</accession>
<accession>O54659</accession>
<gene>
    <name evidence="1" type="primary">mtgA</name>
    <name type="synonym">mtg</name>
    <name type="ordered locus">NMA2130</name>
</gene>
<dbReference type="EC" id="2.4.99.28" evidence="1"/>
<dbReference type="EMBL" id="AL157959">
    <property type="protein sequence ID" value="CAM09227.1"/>
    <property type="molecule type" value="Genomic_DNA"/>
</dbReference>
<dbReference type="RefSeq" id="WP_002246789.1">
    <property type="nucleotide sequence ID" value="NC_003116.1"/>
</dbReference>
<dbReference type="SMR" id="P0A0Z3"/>
<dbReference type="CAZy" id="GT51">
    <property type="family name" value="Glycosyltransferase Family 51"/>
</dbReference>
<dbReference type="EnsemblBacteria" id="CAM09227">
    <property type="protein sequence ID" value="CAM09227"/>
    <property type="gene ID" value="NMA2130"/>
</dbReference>
<dbReference type="GeneID" id="93387450"/>
<dbReference type="KEGG" id="nma:NMA2130"/>
<dbReference type="HOGENOM" id="CLU_006354_1_0_4"/>
<dbReference type="UniPathway" id="UPA00219"/>
<dbReference type="Proteomes" id="UP000000626">
    <property type="component" value="Chromosome"/>
</dbReference>
<dbReference type="GO" id="GO:0009274">
    <property type="term" value="C:peptidoglycan-based cell wall"/>
    <property type="evidence" value="ECO:0007669"/>
    <property type="project" value="InterPro"/>
</dbReference>
<dbReference type="GO" id="GO:0005886">
    <property type="term" value="C:plasma membrane"/>
    <property type="evidence" value="ECO:0007669"/>
    <property type="project" value="UniProtKB-SubCell"/>
</dbReference>
<dbReference type="GO" id="GO:0016763">
    <property type="term" value="F:pentosyltransferase activity"/>
    <property type="evidence" value="ECO:0007669"/>
    <property type="project" value="InterPro"/>
</dbReference>
<dbReference type="GO" id="GO:0008955">
    <property type="term" value="F:peptidoglycan glycosyltransferase activity"/>
    <property type="evidence" value="ECO:0007669"/>
    <property type="project" value="UniProtKB-UniRule"/>
</dbReference>
<dbReference type="GO" id="GO:0071555">
    <property type="term" value="P:cell wall organization"/>
    <property type="evidence" value="ECO:0007669"/>
    <property type="project" value="UniProtKB-KW"/>
</dbReference>
<dbReference type="GO" id="GO:0009252">
    <property type="term" value="P:peptidoglycan biosynthetic process"/>
    <property type="evidence" value="ECO:0007669"/>
    <property type="project" value="UniProtKB-UniRule"/>
</dbReference>
<dbReference type="GO" id="GO:0008360">
    <property type="term" value="P:regulation of cell shape"/>
    <property type="evidence" value="ECO:0007669"/>
    <property type="project" value="UniProtKB-KW"/>
</dbReference>
<dbReference type="Gene3D" id="1.10.3810.10">
    <property type="entry name" value="Biosynthetic peptidoglycan transglycosylase-like"/>
    <property type="match status" value="1"/>
</dbReference>
<dbReference type="HAMAP" id="MF_00766">
    <property type="entry name" value="PGT_MtgA"/>
    <property type="match status" value="1"/>
</dbReference>
<dbReference type="InterPro" id="IPR001264">
    <property type="entry name" value="Glyco_trans_51"/>
</dbReference>
<dbReference type="InterPro" id="IPR023346">
    <property type="entry name" value="Lysozyme-like_dom_sf"/>
</dbReference>
<dbReference type="InterPro" id="IPR036950">
    <property type="entry name" value="PBP_transglycosylase"/>
</dbReference>
<dbReference type="InterPro" id="IPR011812">
    <property type="entry name" value="Pep_trsgly"/>
</dbReference>
<dbReference type="NCBIfam" id="TIGR02070">
    <property type="entry name" value="mono_pep_trsgly"/>
    <property type="match status" value="1"/>
</dbReference>
<dbReference type="PANTHER" id="PTHR30400:SF0">
    <property type="entry name" value="BIOSYNTHETIC PEPTIDOGLYCAN TRANSGLYCOSYLASE"/>
    <property type="match status" value="1"/>
</dbReference>
<dbReference type="PANTHER" id="PTHR30400">
    <property type="entry name" value="MONOFUNCTIONAL BIOSYNTHETIC PEPTIDOGLYCAN TRANSGLYCOSYLASE"/>
    <property type="match status" value="1"/>
</dbReference>
<dbReference type="Pfam" id="PF00912">
    <property type="entry name" value="Transgly"/>
    <property type="match status" value="1"/>
</dbReference>
<dbReference type="SUPFAM" id="SSF53955">
    <property type="entry name" value="Lysozyme-like"/>
    <property type="match status" value="1"/>
</dbReference>
<protein>
    <recommendedName>
        <fullName evidence="1">Biosynthetic peptidoglycan transglycosylase</fullName>
        <ecNumber evidence="1">2.4.99.28</ecNumber>
    </recommendedName>
    <alternativeName>
        <fullName evidence="1">Glycan polymerase</fullName>
    </alternativeName>
    <alternativeName>
        <fullName evidence="1">Peptidoglycan glycosyltransferase MtgA</fullName>
        <shortName evidence="1">PGT</shortName>
    </alternativeName>
</protein>
<sequence length="233" mass="26631">MFRIIKWLIALPVGIFIFFNAYVYGNIITYRAVAPHRTAFMSMRMKQFEQEGRDVALDYRWMPYKRISTNLKKALIASEDARFAGHGGFDWGGIQNAIRRNRNSGKVKAGGSTISQQLAKNLFLNESRSYIRKGEEAAITAMMEAVTDKDRIFELYLNSIEWHYGVFGAEAASRYFYQIPAAKLTKQQAAKLTARVPAPLYYADHPKSKRLRNKTNIVLRRMGSAELPESDTD</sequence>
<feature type="chain" id="PRO_0000083131" description="Biosynthetic peptidoglycan transglycosylase">
    <location>
        <begin position="1"/>
        <end position="233"/>
    </location>
</feature>
<feature type="transmembrane region" description="Helical" evidence="1">
    <location>
        <begin position="8"/>
        <end position="28"/>
    </location>
</feature>
<evidence type="ECO:0000255" key="1">
    <source>
        <dbReference type="HAMAP-Rule" id="MF_00766"/>
    </source>
</evidence>
<proteinExistence type="inferred from homology"/>
<keyword id="KW-0997">Cell inner membrane</keyword>
<keyword id="KW-1003">Cell membrane</keyword>
<keyword id="KW-0133">Cell shape</keyword>
<keyword id="KW-0961">Cell wall biogenesis/degradation</keyword>
<keyword id="KW-0328">Glycosyltransferase</keyword>
<keyword id="KW-0472">Membrane</keyword>
<keyword id="KW-0573">Peptidoglycan synthesis</keyword>
<keyword id="KW-0808">Transferase</keyword>
<keyword id="KW-0812">Transmembrane</keyword>
<keyword id="KW-1133">Transmembrane helix</keyword>
<name>MTGA_NEIMA</name>
<reference key="1">
    <citation type="journal article" date="2000" name="Nature">
        <title>Complete DNA sequence of a serogroup A strain of Neisseria meningitidis Z2491.</title>
        <authorList>
            <person name="Parkhill J."/>
            <person name="Achtman M."/>
            <person name="James K.D."/>
            <person name="Bentley S.D."/>
            <person name="Churcher C.M."/>
            <person name="Klee S.R."/>
            <person name="Morelli G."/>
            <person name="Basham D."/>
            <person name="Brown D."/>
            <person name="Chillingworth T."/>
            <person name="Davies R.M."/>
            <person name="Davis P."/>
            <person name="Devlin K."/>
            <person name="Feltwell T."/>
            <person name="Hamlin N."/>
            <person name="Holroyd S."/>
            <person name="Jagels K."/>
            <person name="Leather S."/>
            <person name="Moule S."/>
            <person name="Mungall K.L."/>
            <person name="Quail M.A."/>
            <person name="Rajandream M.A."/>
            <person name="Rutherford K.M."/>
            <person name="Simmonds M."/>
            <person name="Skelton J."/>
            <person name="Whitehead S."/>
            <person name="Spratt B.G."/>
            <person name="Barrell B.G."/>
        </authorList>
    </citation>
    <scope>NUCLEOTIDE SEQUENCE [LARGE SCALE GENOMIC DNA]</scope>
    <source>
        <strain>DSM 15465 / Z2491</strain>
    </source>
</reference>